<feature type="chain" id="PRO_1000212934" description="Probable cobalt-precorrin-6B C(15)-methyltransferase (decarboxylating)">
    <location>
        <begin position="1"/>
        <end position="199"/>
    </location>
</feature>
<feature type="binding site" evidence="1">
    <location>
        <position position="24"/>
    </location>
    <ligand>
        <name>S-adenosyl-L-methionine</name>
        <dbReference type="ChEBI" id="CHEBI:59789"/>
    </ligand>
</feature>
<feature type="binding site" evidence="1">
    <location>
        <begin position="48"/>
        <end position="52"/>
    </location>
    <ligand>
        <name>S-adenosyl-L-methionine</name>
        <dbReference type="ChEBI" id="CHEBI:59789"/>
    </ligand>
</feature>
<feature type="binding site" evidence="1">
    <location>
        <position position="72"/>
    </location>
    <ligand>
        <name>S-adenosyl-L-methionine</name>
        <dbReference type="ChEBI" id="CHEBI:59789"/>
    </ligand>
</feature>
<feature type="binding site" evidence="1">
    <location>
        <position position="101"/>
    </location>
    <ligand>
        <name>S-adenosyl-L-methionine</name>
        <dbReference type="ChEBI" id="CHEBI:59789"/>
    </ligand>
</feature>
<comment type="function">
    <text evidence="1">Catalyzes the methylation of C-15 in cobalt-precorrin-6B followed by the decarboxylation of C-12 to form cobalt-precorrin-7.</text>
</comment>
<comment type="catalytic activity">
    <reaction evidence="1">
        <text>Co-precorrin-6B + S-adenosyl-L-methionine = Co-precorrin-7 + S-adenosyl-L-homocysteine + CO2</text>
        <dbReference type="Rhea" id="RHEA:36067"/>
        <dbReference type="ChEBI" id="CHEBI:16526"/>
        <dbReference type="ChEBI" id="CHEBI:57856"/>
        <dbReference type="ChEBI" id="CHEBI:59789"/>
        <dbReference type="ChEBI" id="CHEBI:70791"/>
        <dbReference type="ChEBI" id="CHEBI:72780"/>
        <dbReference type="EC" id="2.1.1.196"/>
    </reaction>
</comment>
<comment type="pathway">
    <text evidence="1">Cofactor biosynthesis; adenosylcobalamin biosynthesis; cob(II)yrinate a,c-diamide from sirohydrochlorin (anaerobic route): step 8/10.</text>
</comment>
<comment type="similarity">
    <text evidence="1">Belongs to the methyltransferase superfamily. Archaeal-type CbiT family.</text>
</comment>
<gene>
    <name evidence="1" type="primary">cbiT</name>
    <name type="ordered locus">YG5714_0112</name>
</gene>
<proteinExistence type="inferred from homology"/>
<keyword id="KW-0169">Cobalamin biosynthesis</keyword>
<keyword id="KW-0489">Methyltransferase</keyword>
<keyword id="KW-0949">S-adenosyl-L-methionine</keyword>
<keyword id="KW-0808">Transferase</keyword>
<reference key="1">
    <citation type="journal article" date="2009" name="Proc. Natl. Acad. Sci. U.S.A.">
        <title>Biogeography of the Sulfolobus islandicus pan-genome.</title>
        <authorList>
            <person name="Reno M.L."/>
            <person name="Held N.L."/>
            <person name="Fields C.J."/>
            <person name="Burke P.V."/>
            <person name="Whitaker R.J."/>
        </authorList>
    </citation>
    <scope>NUCLEOTIDE SEQUENCE [LARGE SCALE GENOMIC DNA]</scope>
    <source>
        <strain>Y.G.57.14 / Yellowstone #1</strain>
    </source>
</reference>
<name>CBIT_SACI7</name>
<organism>
    <name type="scientific">Saccharolobus islandicus (strain Y.G.57.14 / Yellowstone #1)</name>
    <name type="common">Sulfolobus islandicus</name>
    <dbReference type="NCBI Taxonomy" id="439386"/>
    <lineage>
        <taxon>Archaea</taxon>
        <taxon>Thermoproteota</taxon>
        <taxon>Thermoprotei</taxon>
        <taxon>Sulfolobales</taxon>
        <taxon>Sulfolobaceae</taxon>
        <taxon>Saccharolobus</taxon>
    </lineage>
</organism>
<dbReference type="EC" id="2.1.1.196" evidence="1"/>
<dbReference type="EMBL" id="CP001403">
    <property type="protein sequence ID" value="ACP44406.1"/>
    <property type="molecule type" value="Genomic_DNA"/>
</dbReference>
<dbReference type="RefSeq" id="WP_012710289.1">
    <property type="nucleotide sequence ID" value="NC_012622.1"/>
</dbReference>
<dbReference type="SMR" id="C3N8G6"/>
<dbReference type="GeneID" id="84060590"/>
<dbReference type="KEGG" id="siy:YG5714_0112"/>
<dbReference type="HOGENOM" id="CLU_094143_0_0_2"/>
<dbReference type="UniPathway" id="UPA00148">
    <property type="reaction ID" value="UER00229"/>
</dbReference>
<dbReference type="Proteomes" id="UP000002308">
    <property type="component" value="Chromosome"/>
</dbReference>
<dbReference type="GO" id="GO:0043776">
    <property type="term" value="F:cobalt-precorrin-6B C5-methyltransferase activity"/>
    <property type="evidence" value="ECO:0007669"/>
    <property type="project" value="RHEA"/>
</dbReference>
<dbReference type="GO" id="GO:0008276">
    <property type="term" value="F:protein methyltransferase activity"/>
    <property type="evidence" value="ECO:0007669"/>
    <property type="project" value="InterPro"/>
</dbReference>
<dbReference type="GO" id="GO:0019251">
    <property type="term" value="P:anaerobic cobalamin biosynthetic process"/>
    <property type="evidence" value="ECO:0007669"/>
    <property type="project" value="UniProtKB-UniRule"/>
</dbReference>
<dbReference type="GO" id="GO:0032259">
    <property type="term" value="P:methylation"/>
    <property type="evidence" value="ECO:0007669"/>
    <property type="project" value="UniProtKB-KW"/>
</dbReference>
<dbReference type="CDD" id="cd02440">
    <property type="entry name" value="AdoMet_MTases"/>
    <property type="match status" value="1"/>
</dbReference>
<dbReference type="Gene3D" id="3.40.50.150">
    <property type="entry name" value="Vaccinia Virus protein VP39"/>
    <property type="match status" value="1"/>
</dbReference>
<dbReference type="HAMAP" id="MF_00786">
    <property type="entry name" value="CbiT"/>
    <property type="match status" value="1"/>
</dbReference>
<dbReference type="InterPro" id="IPR023475">
    <property type="entry name" value="CbiT"/>
</dbReference>
<dbReference type="InterPro" id="IPR014008">
    <property type="entry name" value="Cbl_synth_MTase_CbiT"/>
</dbReference>
<dbReference type="InterPro" id="IPR050714">
    <property type="entry name" value="Cobalamin_biosynth_MTase"/>
</dbReference>
<dbReference type="InterPro" id="IPR025714">
    <property type="entry name" value="Methyltranfer_dom"/>
</dbReference>
<dbReference type="InterPro" id="IPR029063">
    <property type="entry name" value="SAM-dependent_MTases_sf"/>
</dbReference>
<dbReference type="NCBIfam" id="TIGR02469">
    <property type="entry name" value="CbiT"/>
    <property type="match status" value="1"/>
</dbReference>
<dbReference type="NCBIfam" id="NF001556">
    <property type="entry name" value="PRK00377.1"/>
    <property type="match status" value="1"/>
</dbReference>
<dbReference type="PANTHER" id="PTHR43182">
    <property type="entry name" value="COBALT-PRECORRIN-6B C(15)-METHYLTRANSFERASE (DECARBOXYLATING)"/>
    <property type="match status" value="1"/>
</dbReference>
<dbReference type="PANTHER" id="PTHR43182:SF1">
    <property type="entry name" value="COBALT-PRECORRIN-7 C(5)-METHYLTRANSFERASE"/>
    <property type="match status" value="1"/>
</dbReference>
<dbReference type="Pfam" id="PF13847">
    <property type="entry name" value="Methyltransf_31"/>
    <property type="match status" value="1"/>
</dbReference>
<dbReference type="SUPFAM" id="SSF53335">
    <property type="entry name" value="S-adenosyl-L-methionine-dependent methyltransferases"/>
    <property type="match status" value="1"/>
</dbReference>
<sequence length="199" mass="22020">MEWKYVIPGIPDNFFERDEEIPMTKEEIRALALSKLRIRKGDMILDIGCGTGSVTVEASLLVGSTGKVYGVDKEEKAINLTRRNAEKFGVLNNIVLIKGEAPEILFTINEKFDRIFIGGGSEKIKEIISASWEIIKKGGRVVIDAILLETVNNAISAMENIGFMNLEITEVIIAKGMKTKVGTAMMTRNPIFIISGEKQ</sequence>
<protein>
    <recommendedName>
        <fullName evidence="1">Probable cobalt-precorrin-6B C(15)-methyltransferase (decarboxylating)</fullName>
        <ecNumber evidence="1">2.1.1.196</ecNumber>
    </recommendedName>
</protein>
<accession>C3N8G6</accession>
<evidence type="ECO:0000255" key="1">
    <source>
        <dbReference type="HAMAP-Rule" id="MF_00786"/>
    </source>
</evidence>